<sequence>MPIILENISVFYSRNTPLEISALKDVNLRIEKGEFVGILGEKGAGKSTLIKLFNGLLRPDSGRITVNGLDPSSKKVKSRVGMVFQQPADQLFCRTVYEEIAFGPLNFGYSRKETEERVFEALEAASLERSMLSRDPLSLSGGEMQRVALAGALALRPDYLVLDEPITGLDPAGKKEILETLKKIKGQGTTIITVTHNLKGFFPLLERIVLIKEGRISFQGSRKEYMETENVPLPPVASMMRELHSRGIQVNPAVFTVEEALKEILRVKSMIEKEKAEKERAEKQTKK</sequence>
<evidence type="ECO:0000250" key="1"/>
<evidence type="ECO:0000255" key="2">
    <source>
        <dbReference type="PROSITE-ProRule" id="PRU00434"/>
    </source>
</evidence>
<evidence type="ECO:0000305" key="3"/>
<gene>
    <name type="ordered locus">MM_1038</name>
</gene>
<reference key="1">
    <citation type="journal article" date="2002" name="J. Mol. Microbiol. Biotechnol.">
        <title>The genome of Methanosarcina mazei: evidence for lateral gene transfer between Bacteria and Archaea.</title>
        <authorList>
            <person name="Deppenmeier U."/>
            <person name="Johann A."/>
            <person name="Hartsch T."/>
            <person name="Merkl R."/>
            <person name="Schmitz R.A."/>
            <person name="Martinez-Arias R."/>
            <person name="Henne A."/>
            <person name="Wiezer A."/>
            <person name="Baeumer S."/>
            <person name="Jacobi C."/>
            <person name="Brueggemann H."/>
            <person name="Lienard T."/>
            <person name="Christmann A."/>
            <person name="Boemecke M."/>
            <person name="Steckel S."/>
            <person name="Bhattacharyya A."/>
            <person name="Lykidis A."/>
            <person name="Overbeek R."/>
            <person name="Klenk H.-P."/>
            <person name="Gunsalus R.P."/>
            <person name="Fritz H.-J."/>
            <person name="Gottschalk G."/>
        </authorList>
    </citation>
    <scope>NUCLEOTIDE SEQUENCE [LARGE SCALE GENOMIC DNA]</scope>
    <source>
        <strain>ATCC BAA-159 / DSM 3647 / Goe1 / Go1 / JCM 11833 / OCM 88</strain>
    </source>
</reference>
<keyword id="KW-0067">ATP-binding</keyword>
<keyword id="KW-1003">Cell membrane</keyword>
<keyword id="KW-0472">Membrane</keyword>
<keyword id="KW-0547">Nucleotide-binding</keyword>
<keyword id="KW-1278">Translocase</keyword>
<keyword id="KW-0813">Transport</keyword>
<accession>Q8PY26</accession>
<name>Y1038_METMA</name>
<protein>
    <recommendedName>
        <fullName>Putative ABC transporter ATP-binding protein MM_1038</fullName>
        <ecNumber>7.-.-.-</ecNumber>
    </recommendedName>
</protein>
<proteinExistence type="inferred from homology"/>
<dbReference type="EC" id="7.-.-.-"/>
<dbReference type="EMBL" id="AE008384">
    <property type="protein sequence ID" value="AAM30734.1"/>
    <property type="status" value="ALT_INIT"/>
    <property type="molecule type" value="Genomic_DNA"/>
</dbReference>
<dbReference type="RefSeq" id="WP_048042632.1">
    <property type="nucleotide sequence ID" value="NC_003901.1"/>
</dbReference>
<dbReference type="SMR" id="Q8PY26"/>
<dbReference type="KEGG" id="mma:MM_1038"/>
<dbReference type="PATRIC" id="fig|192952.21.peg.1217"/>
<dbReference type="eggNOG" id="arCOG00202">
    <property type="taxonomic scope" value="Archaea"/>
</dbReference>
<dbReference type="HOGENOM" id="CLU_000604_1_22_2"/>
<dbReference type="Proteomes" id="UP000000595">
    <property type="component" value="Chromosome"/>
</dbReference>
<dbReference type="GO" id="GO:0043190">
    <property type="term" value="C:ATP-binding cassette (ABC) transporter complex"/>
    <property type="evidence" value="ECO:0007669"/>
    <property type="project" value="TreeGrafter"/>
</dbReference>
<dbReference type="GO" id="GO:0005524">
    <property type="term" value="F:ATP binding"/>
    <property type="evidence" value="ECO:0007669"/>
    <property type="project" value="UniProtKB-KW"/>
</dbReference>
<dbReference type="GO" id="GO:0016887">
    <property type="term" value="F:ATP hydrolysis activity"/>
    <property type="evidence" value="ECO:0007669"/>
    <property type="project" value="InterPro"/>
</dbReference>
<dbReference type="GO" id="GO:0042626">
    <property type="term" value="F:ATPase-coupled transmembrane transporter activity"/>
    <property type="evidence" value="ECO:0007669"/>
    <property type="project" value="TreeGrafter"/>
</dbReference>
<dbReference type="CDD" id="cd03225">
    <property type="entry name" value="ABC_cobalt_CbiO_domain1"/>
    <property type="match status" value="1"/>
</dbReference>
<dbReference type="FunFam" id="3.40.50.300:FF:003227">
    <property type="entry name" value="ATPase component BioM of energizing module of biotin ECF transporter"/>
    <property type="match status" value="1"/>
</dbReference>
<dbReference type="Gene3D" id="3.40.50.300">
    <property type="entry name" value="P-loop containing nucleotide triphosphate hydrolases"/>
    <property type="match status" value="1"/>
</dbReference>
<dbReference type="InterPro" id="IPR003593">
    <property type="entry name" value="AAA+_ATPase"/>
</dbReference>
<dbReference type="InterPro" id="IPR003439">
    <property type="entry name" value="ABC_transporter-like_ATP-bd"/>
</dbReference>
<dbReference type="InterPro" id="IPR017871">
    <property type="entry name" value="ABC_transporter-like_CS"/>
</dbReference>
<dbReference type="InterPro" id="IPR015856">
    <property type="entry name" value="ABC_transpr_CbiO/EcfA_su"/>
</dbReference>
<dbReference type="InterPro" id="IPR050095">
    <property type="entry name" value="ECF_ABC_transporter_ATP-bd"/>
</dbReference>
<dbReference type="InterPro" id="IPR027417">
    <property type="entry name" value="P-loop_NTPase"/>
</dbReference>
<dbReference type="PANTHER" id="PTHR43553:SF24">
    <property type="entry name" value="ENERGY-COUPLING FACTOR TRANSPORTER ATP-BINDING PROTEIN ECFA1"/>
    <property type="match status" value="1"/>
</dbReference>
<dbReference type="PANTHER" id="PTHR43553">
    <property type="entry name" value="HEAVY METAL TRANSPORTER"/>
    <property type="match status" value="1"/>
</dbReference>
<dbReference type="Pfam" id="PF00005">
    <property type="entry name" value="ABC_tran"/>
    <property type="match status" value="1"/>
</dbReference>
<dbReference type="SMART" id="SM00382">
    <property type="entry name" value="AAA"/>
    <property type="match status" value="1"/>
</dbReference>
<dbReference type="SUPFAM" id="SSF52540">
    <property type="entry name" value="P-loop containing nucleoside triphosphate hydrolases"/>
    <property type="match status" value="1"/>
</dbReference>
<dbReference type="PROSITE" id="PS00211">
    <property type="entry name" value="ABC_TRANSPORTER_1"/>
    <property type="match status" value="1"/>
</dbReference>
<dbReference type="PROSITE" id="PS50893">
    <property type="entry name" value="ABC_TRANSPORTER_2"/>
    <property type="match status" value="1"/>
</dbReference>
<feature type="chain" id="PRO_0000092145" description="Putative ABC transporter ATP-binding protein MM_1038">
    <location>
        <begin position="1"/>
        <end position="287"/>
    </location>
</feature>
<feature type="domain" description="ABC transporter" evidence="2">
    <location>
        <begin position="5"/>
        <end position="238"/>
    </location>
</feature>
<feature type="binding site" evidence="2">
    <location>
        <begin position="40"/>
        <end position="47"/>
    </location>
    <ligand>
        <name>ATP</name>
        <dbReference type="ChEBI" id="CHEBI:30616"/>
    </ligand>
</feature>
<comment type="function">
    <text evidence="1">Probably part of an ABC transporter complex. Responsible for energy coupling to the transport system (By similarity).</text>
</comment>
<comment type="subcellular location">
    <subcellularLocation>
        <location evidence="1">Cell membrane</location>
        <topology evidence="1">Peripheral membrane protein</topology>
    </subcellularLocation>
</comment>
<comment type="similarity">
    <text evidence="3">Belongs to the ABC transporter superfamily.</text>
</comment>
<comment type="sequence caution" evidence="3">
    <conflict type="erroneous initiation">
        <sequence resource="EMBL-CDS" id="AAM30734"/>
    </conflict>
</comment>
<organism>
    <name type="scientific">Methanosarcina mazei (strain ATCC BAA-159 / DSM 3647 / Goe1 / Go1 / JCM 11833 / OCM 88)</name>
    <name type="common">Methanosarcina frisia</name>
    <dbReference type="NCBI Taxonomy" id="192952"/>
    <lineage>
        <taxon>Archaea</taxon>
        <taxon>Methanobacteriati</taxon>
        <taxon>Methanobacteriota</taxon>
        <taxon>Stenosarchaea group</taxon>
        <taxon>Methanomicrobia</taxon>
        <taxon>Methanosarcinales</taxon>
        <taxon>Methanosarcinaceae</taxon>
        <taxon>Methanosarcina</taxon>
    </lineage>
</organism>